<feature type="chain" id="PRO_1000076747" description="N-acetyl-gamma-glutamyl-phosphate reductase">
    <location>
        <begin position="1"/>
        <end position="340"/>
    </location>
</feature>
<feature type="active site" evidence="1">
    <location>
        <position position="146"/>
    </location>
</feature>
<comment type="function">
    <text evidence="1">Catalyzes the NADPH-dependent reduction of N-acetyl-5-glutamyl phosphate to yield N-acetyl-L-glutamate 5-semialdehyde.</text>
</comment>
<comment type="catalytic activity">
    <reaction evidence="1">
        <text>N-acetyl-L-glutamate 5-semialdehyde + phosphate + NADP(+) = N-acetyl-L-glutamyl 5-phosphate + NADPH + H(+)</text>
        <dbReference type="Rhea" id="RHEA:21588"/>
        <dbReference type="ChEBI" id="CHEBI:15378"/>
        <dbReference type="ChEBI" id="CHEBI:29123"/>
        <dbReference type="ChEBI" id="CHEBI:43474"/>
        <dbReference type="ChEBI" id="CHEBI:57783"/>
        <dbReference type="ChEBI" id="CHEBI:57936"/>
        <dbReference type="ChEBI" id="CHEBI:58349"/>
        <dbReference type="EC" id="1.2.1.38"/>
    </reaction>
</comment>
<comment type="pathway">
    <text evidence="1">Amino-acid biosynthesis; L-arginine biosynthesis; N(2)-acetyl-L-ornithine from L-glutamate: step 3/4.</text>
</comment>
<comment type="subcellular location">
    <subcellularLocation>
        <location evidence="1">Cytoplasm</location>
    </subcellularLocation>
</comment>
<comment type="similarity">
    <text evidence="1">Belongs to the NAGSA dehydrogenase family. Type 1 subfamily.</text>
</comment>
<gene>
    <name evidence="1" type="primary">argC</name>
    <name type="ordered locus">SGO_1569</name>
</gene>
<evidence type="ECO:0000255" key="1">
    <source>
        <dbReference type="HAMAP-Rule" id="MF_00150"/>
    </source>
</evidence>
<name>ARGC_STRGC</name>
<sequence length="340" mass="37897">MRISIVGITGYSGMELLRILLQHPQVEVVSLHASQDREAPVSELYPHLKGICDLKIEAFDSQEIMRRADLVFFATSSGVAKDLSKDFVEVGFPVIDLSGDHRLPGNIYKKWYQKEPAEDHVQKKFIYGLSEFADVRGERFIANPGCYATATELALIPLLQAQAIELDSIIVDAKSGLTGAGKNPAASSHFVHVHDNYVTYKLNQHQHIPEIVQQLQRFDESLQQIQFSTSLIPLNRGIVATVYSKLKEPLTQEELTAIYQECYQEKPFVRIQATLPSLHQVVGTNYTDIGFDYNHVTNILTVVAVLDNLIKGAAGQAVQNMNLMLGFPETDGLLSQPSYV</sequence>
<dbReference type="EC" id="1.2.1.38" evidence="1"/>
<dbReference type="EMBL" id="CP000725">
    <property type="protein sequence ID" value="ABV09233.1"/>
    <property type="molecule type" value="Genomic_DNA"/>
</dbReference>
<dbReference type="RefSeq" id="WP_012130634.1">
    <property type="nucleotide sequence ID" value="NC_009785.1"/>
</dbReference>
<dbReference type="SMR" id="A8AYI7"/>
<dbReference type="STRING" id="467705.SGO_1569"/>
<dbReference type="KEGG" id="sgo:SGO_1569"/>
<dbReference type="eggNOG" id="COG0002">
    <property type="taxonomic scope" value="Bacteria"/>
</dbReference>
<dbReference type="HOGENOM" id="CLU_006384_0_1_9"/>
<dbReference type="UniPathway" id="UPA00068">
    <property type="reaction ID" value="UER00108"/>
</dbReference>
<dbReference type="Proteomes" id="UP000001131">
    <property type="component" value="Chromosome"/>
</dbReference>
<dbReference type="GO" id="GO:0005737">
    <property type="term" value="C:cytoplasm"/>
    <property type="evidence" value="ECO:0007669"/>
    <property type="project" value="UniProtKB-SubCell"/>
</dbReference>
<dbReference type="GO" id="GO:0003942">
    <property type="term" value="F:N-acetyl-gamma-glutamyl-phosphate reductase activity"/>
    <property type="evidence" value="ECO:0007669"/>
    <property type="project" value="UniProtKB-UniRule"/>
</dbReference>
<dbReference type="GO" id="GO:0051287">
    <property type="term" value="F:NAD binding"/>
    <property type="evidence" value="ECO:0007669"/>
    <property type="project" value="InterPro"/>
</dbReference>
<dbReference type="GO" id="GO:0070401">
    <property type="term" value="F:NADP+ binding"/>
    <property type="evidence" value="ECO:0007669"/>
    <property type="project" value="InterPro"/>
</dbReference>
<dbReference type="GO" id="GO:0006526">
    <property type="term" value="P:L-arginine biosynthetic process"/>
    <property type="evidence" value="ECO:0007669"/>
    <property type="project" value="UniProtKB-UniRule"/>
</dbReference>
<dbReference type="CDD" id="cd23934">
    <property type="entry name" value="AGPR_1_C"/>
    <property type="match status" value="1"/>
</dbReference>
<dbReference type="CDD" id="cd17895">
    <property type="entry name" value="AGPR_1_N"/>
    <property type="match status" value="1"/>
</dbReference>
<dbReference type="FunFam" id="3.30.360.10:FF:000014">
    <property type="entry name" value="N-acetyl-gamma-glutamyl-phosphate reductase"/>
    <property type="match status" value="1"/>
</dbReference>
<dbReference type="Gene3D" id="3.30.360.10">
    <property type="entry name" value="Dihydrodipicolinate Reductase, domain 2"/>
    <property type="match status" value="1"/>
</dbReference>
<dbReference type="Gene3D" id="3.40.50.720">
    <property type="entry name" value="NAD(P)-binding Rossmann-like Domain"/>
    <property type="match status" value="1"/>
</dbReference>
<dbReference type="HAMAP" id="MF_00150">
    <property type="entry name" value="ArgC_type1"/>
    <property type="match status" value="1"/>
</dbReference>
<dbReference type="InterPro" id="IPR023013">
    <property type="entry name" value="AGPR_AS"/>
</dbReference>
<dbReference type="InterPro" id="IPR000706">
    <property type="entry name" value="AGPR_type-1"/>
</dbReference>
<dbReference type="InterPro" id="IPR036291">
    <property type="entry name" value="NAD(P)-bd_dom_sf"/>
</dbReference>
<dbReference type="InterPro" id="IPR050085">
    <property type="entry name" value="NAGSA_dehydrogenase"/>
</dbReference>
<dbReference type="InterPro" id="IPR000534">
    <property type="entry name" value="Semialdehyde_DH_NAD-bd"/>
</dbReference>
<dbReference type="NCBIfam" id="TIGR01850">
    <property type="entry name" value="argC"/>
    <property type="match status" value="1"/>
</dbReference>
<dbReference type="PANTHER" id="PTHR32338:SF10">
    <property type="entry name" value="N-ACETYL-GAMMA-GLUTAMYL-PHOSPHATE REDUCTASE, CHLOROPLASTIC-RELATED"/>
    <property type="match status" value="1"/>
</dbReference>
<dbReference type="PANTHER" id="PTHR32338">
    <property type="entry name" value="N-ACETYL-GAMMA-GLUTAMYL-PHOSPHATE REDUCTASE, CHLOROPLASTIC-RELATED-RELATED"/>
    <property type="match status" value="1"/>
</dbReference>
<dbReference type="Pfam" id="PF01118">
    <property type="entry name" value="Semialdhyde_dh"/>
    <property type="match status" value="1"/>
</dbReference>
<dbReference type="Pfam" id="PF22698">
    <property type="entry name" value="Semialdhyde_dhC_1"/>
    <property type="match status" value="1"/>
</dbReference>
<dbReference type="SMART" id="SM00859">
    <property type="entry name" value="Semialdhyde_dh"/>
    <property type="match status" value="1"/>
</dbReference>
<dbReference type="SUPFAM" id="SSF55347">
    <property type="entry name" value="Glyceraldehyde-3-phosphate dehydrogenase-like, C-terminal domain"/>
    <property type="match status" value="1"/>
</dbReference>
<dbReference type="SUPFAM" id="SSF51735">
    <property type="entry name" value="NAD(P)-binding Rossmann-fold domains"/>
    <property type="match status" value="1"/>
</dbReference>
<dbReference type="PROSITE" id="PS01224">
    <property type="entry name" value="ARGC"/>
    <property type="match status" value="1"/>
</dbReference>
<accession>A8AYI7</accession>
<protein>
    <recommendedName>
        <fullName evidence="1">N-acetyl-gamma-glutamyl-phosphate reductase</fullName>
        <shortName evidence="1">AGPR</shortName>
        <ecNumber evidence="1">1.2.1.38</ecNumber>
    </recommendedName>
    <alternativeName>
        <fullName evidence="1">N-acetyl-glutamate semialdehyde dehydrogenase</fullName>
        <shortName evidence="1">NAGSA dehydrogenase</shortName>
    </alternativeName>
</protein>
<reference key="1">
    <citation type="journal article" date="2007" name="J. Bacteriol.">
        <title>Genome-wide transcriptional changes in Streptococcus gordonii in response to competence signaling peptide.</title>
        <authorList>
            <person name="Vickerman M.M."/>
            <person name="Iobst S."/>
            <person name="Jesionowski A.M."/>
            <person name="Gill S.R."/>
        </authorList>
    </citation>
    <scope>NUCLEOTIDE SEQUENCE [LARGE SCALE GENOMIC DNA]</scope>
    <source>
        <strain>Challis / ATCC 35105 / BCRC 15272 / CH1 / DL1 / V288</strain>
    </source>
</reference>
<keyword id="KW-0028">Amino-acid biosynthesis</keyword>
<keyword id="KW-0055">Arginine biosynthesis</keyword>
<keyword id="KW-0963">Cytoplasm</keyword>
<keyword id="KW-0521">NADP</keyword>
<keyword id="KW-0560">Oxidoreductase</keyword>
<keyword id="KW-1185">Reference proteome</keyword>
<organism>
    <name type="scientific">Streptococcus gordonii (strain Challis / ATCC 35105 / BCRC 15272 / CH1 / DL1 / V288)</name>
    <dbReference type="NCBI Taxonomy" id="467705"/>
    <lineage>
        <taxon>Bacteria</taxon>
        <taxon>Bacillati</taxon>
        <taxon>Bacillota</taxon>
        <taxon>Bacilli</taxon>
        <taxon>Lactobacillales</taxon>
        <taxon>Streptococcaceae</taxon>
        <taxon>Streptococcus</taxon>
    </lineage>
</organism>
<proteinExistence type="inferred from homology"/>